<sequence>MGVPALFRWLSRKYPKIISPVVEDDVTQEIGAAQFSDPNPNGELDNLYLDMNGIVHPCSHPEHKLPPETEDEMFLDVFKYTDRVLLMARPRKVLMIAVDGVAPRAKMNQQRSRRFRSAQDAKIAHEEKERQIRERESRGESIDDAIKGKKSWDSNAITPGTPFMDSLAQALRYWVAYKLATDPGWANLQVIISDATVPGEGEHKLMSFIRSQRSDPEYDPNTKHCIYGLDADLIFLGLATHEPHFRVLREDVFANQSRQMRISDQLSMTQDQKDSIAEQDAKKPFLWLHVNVLREYLEIELYNPHLSFPFDLERAIDDWVFMCFFVGNDFLPHLPSLDVRDNGIDILVNCWKRMLPKLRDYITCDGNLNLESVEKLLSSLSYKEDEIFRKRHEGEKRREENDKRRKLAQEEEKALKNQYIPQVSKGSDKAPLTADINMPLLSTSGDAVEGYAQLSNKDIVENRDVITKANMSNADAAAALKKLLDSKNNKESDKNVSASAAIQEQQNKSDINTTENSKKRPIDQVEAELPKPDENGDSVRMWEPGYRQRYYQSKFGVVSEEEINKIRRDMVRCYLEGISWVLLYYYQGCPSWQWYYPYHYAPFAADFVNINDIIGEQGIKFTLGEPFKPYEQLMSVLPAASGHNLPEVLRILMSDPSSEILDFYPEEFQIDMNGKKMSWQGIALLPFIDENRLLEALEKRYHLLTDDERERNTLKNEVLFISNQNKNYKRFYNELYDNNVKELKFRFSRSSLAGTVIKNEYFVPDGITKFPLSEGDMPDLNNIEFFQSSYKMPTKKMGKSMLINGYISHTRTLTQEDRDSILHGNQRNGGYNRFRTPNDNSGYVNKGPSGKEDYLIYSMRRGGYRAFMHNLKNQNQQHQQPVPMNAMANNSYDNQYNSYSNNNNYNNNYNGGYPNQSNNNYSNQNSYNNYSNQNSYNNYNNQNSYNNYNNRNNHGNYNNYNRYNNQGSNYDRQGQGNASSNRSGYIPAPNRTGNFRNRNGYNR</sequence>
<protein>
    <recommendedName>
        <fullName>5'-3' exoribonuclease 2</fullName>
        <ecNumber>3.1.13.-</ecNumber>
    </recommendedName>
</protein>
<accession>Q6BNU7</accession>
<feature type="initiator methionine" description="Removed" evidence="1">
    <location>
        <position position="1"/>
    </location>
</feature>
<feature type="chain" id="PRO_0000249924" description="5'-3' exoribonuclease 2">
    <location>
        <begin position="2"/>
        <end position="1003"/>
    </location>
</feature>
<feature type="region of interest" description="Disordered" evidence="5">
    <location>
        <begin position="107"/>
        <end position="145"/>
    </location>
</feature>
<feature type="region of interest" description="Disordered" evidence="5">
    <location>
        <begin position="488"/>
        <end position="538"/>
    </location>
</feature>
<feature type="region of interest" description="Disordered" evidence="5">
    <location>
        <begin position="821"/>
        <end position="847"/>
    </location>
</feature>
<feature type="region of interest" description="Disordered" evidence="5">
    <location>
        <begin position="874"/>
        <end position="1003"/>
    </location>
</feature>
<feature type="coiled-coil region" evidence="4">
    <location>
        <begin position="389"/>
        <end position="419"/>
    </location>
</feature>
<feature type="coiled-coil region" evidence="4">
    <location>
        <begin position="690"/>
        <end position="730"/>
    </location>
</feature>
<feature type="compositionally biased region" description="Basic and acidic residues" evidence="5">
    <location>
        <begin position="117"/>
        <end position="145"/>
    </location>
</feature>
<feature type="compositionally biased region" description="Polar residues" evidence="5">
    <location>
        <begin position="495"/>
        <end position="515"/>
    </location>
</feature>
<feature type="compositionally biased region" description="Basic and acidic residues" evidence="5">
    <location>
        <begin position="516"/>
        <end position="534"/>
    </location>
</feature>
<feature type="compositionally biased region" description="Polar residues" evidence="5">
    <location>
        <begin position="823"/>
        <end position="843"/>
    </location>
</feature>
<feature type="compositionally biased region" description="Low complexity" evidence="5">
    <location>
        <begin position="889"/>
        <end position="970"/>
    </location>
</feature>
<feature type="compositionally biased region" description="Polar residues" evidence="5">
    <location>
        <begin position="971"/>
        <end position="983"/>
    </location>
</feature>
<feature type="compositionally biased region" description="Polar residues" evidence="5">
    <location>
        <begin position="991"/>
        <end position="1003"/>
    </location>
</feature>
<reference key="1">
    <citation type="journal article" date="2004" name="Nature">
        <title>Genome evolution in yeasts.</title>
        <authorList>
            <person name="Dujon B."/>
            <person name="Sherman D."/>
            <person name="Fischer G."/>
            <person name="Durrens P."/>
            <person name="Casaregola S."/>
            <person name="Lafontaine I."/>
            <person name="de Montigny J."/>
            <person name="Marck C."/>
            <person name="Neuveglise C."/>
            <person name="Talla E."/>
            <person name="Goffard N."/>
            <person name="Frangeul L."/>
            <person name="Aigle M."/>
            <person name="Anthouard V."/>
            <person name="Babour A."/>
            <person name="Barbe V."/>
            <person name="Barnay S."/>
            <person name="Blanchin S."/>
            <person name="Beckerich J.-M."/>
            <person name="Beyne E."/>
            <person name="Bleykasten C."/>
            <person name="Boisrame A."/>
            <person name="Boyer J."/>
            <person name="Cattolico L."/>
            <person name="Confanioleri F."/>
            <person name="de Daruvar A."/>
            <person name="Despons L."/>
            <person name="Fabre E."/>
            <person name="Fairhead C."/>
            <person name="Ferry-Dumazet H."/>
            <person name="Groppi A."/>
            <person name="Hantraye F."/>
            <person name="Hennequin C."/>
            <person name="Jauniaux N."/>
            <person name="Joyet P."/>
            <person name="Kachouri R."/>
            <person name="Kerrest A."/>
            <person name="Koszul R."/>
            <person name="Lemaire M."/>
            <person name="Lesur I."/>
            <person name="Ma L."/>
            <person name="Muller H."/>
            <person name="Nicaud J.-M."/>
            <person name="Nikolski M."/>
            <person name="Oztas S."/>
            <person name="Ozier-Kalogeropoulos O."/>
            <person name="Pellenz S."/>
            <person name="Potier S."/>
            <person name="Richard G.-F."/>
            <person name="Straub M.-L."/>
            <person name="Suleau A."/>
            <person name="Swennen D."/>
            <person name="Tekaia F."/>
            <person name="Wesolowski-Louvel M."/>
            <person name="Westhof E."/>
            <person name="Wirth B."/>
            <person name="Zeniou-Meyer M."/>
            <person name="Zivanovic Y."/>
            <person name="Bolotin-Fukuhara M."/>
            <person name="Thierry A."/>
            <person name="Bouchier C."/>
            <person name="Caudron B."/>
            <person name="Scarpelli C."/>
            <person name="Gaillardin C."/>
            <person name="Weissenbach J."/>
            <person name="Wincker P."/>
            <person name="Souciet J.-L."/>
        </authorList>
    </citation>
    <scope>NUCLEOTIDE SEQUENCE [LARGE SCALE GENOMIC DNA]</scope>
    <source>
        <strain>ATCC 36239 / CBS 767 / BCRC 21394 / JCM 1990 / NBRC 0083 / IGC 2968</strain>
    </source>
</reference>
<proteinExistence type="inferred from homology"/>
<keyword id="KW-0175">Coiled coil</keyword>
<keyword id="KW-0269">Exonuclease</keyword>
<keyword id="KW-0378">Hydrolase</keyword>
<keyword id="KW-0507">mRNA processing</keyword>
<keyword id="KW-0540">Nuclease</keyword>
<keyword id="KW-0539">Nucleus</keyword>
<keyword id="KW-1185">Reference proteome</keyword>
<keyword id="KW-0698">rRNA processing</keyword>
<keyword id="KW-0804">Transcription</keyword>
<keyword id="KW-0805">Transcription regulation</keyword>
<keyword id="KW-0806">Transcription termination</keyword>
<comment type="function">
    <text evidence="2 3">Possesses 5'-&gt;3' exoribonuclease activity (By similarity). Required for the processing of nuclear mRNA and rRNA precursors. May promote the termination of transcription by RNA polymerase II (By similarity). Essential for vegetative cell growth and chromosome segregation (By similarity).</text>
</comment>
<comment type="subunit">
    <text evidence="2">Interacts with RAI1; the interaction is direct, stabilizes RAT1 protein structure and may stimulate its exoribonuclease activity (By similarity). The interaction also stimulates RAI1 pyrophosphohydrolase activity, probably by recruiting it to mRNA substrates (By similarity).</text>
</comment>
<comment type="subcellular location">
    <subcellularLocation>
        <location evidence="1">Nucleus</location>
    </subcellularLocation>
</comment>
<comment type="similarity">
    <text evidence="6">Belongs to the 5'-3' exonuclease family. XRN2/RAT1 subfamily.</text>
</comment>
<name>XRN2_DEBHA</name>
<dbReference type="EC" id="3.1.13.-"/>
<dbReference type="EMBL" id="CR382137">
    <property type="protein sequence ID" value="CAG88393.2"/>
    <property type="molecule type" value="Genomic_DNA"/>
</dbReference>
<dbReference type="RefSeq" id="XP_460123.2">
    <property type="nucleotide sequence ID" value="XM_460123.1"/>
</dbReference>
<dbReference type="SMR" id="Q6BNU7"/>
<dbReference type="FunCoup" id="Q6BNU7">
    <property type="interactions" value="1140"/>
</dbReference>
<dbReference type="STRING" id="284592.Q6BNU7"/>
<dbReference type="GeneID" id="2902801"/>
<dbReference type="KEGG" id="dha:DEHA2E18898g"/>
<dbReference type="VEuPathDB" id="FungiDB:DEHA2E18898g"/>
<dbReference type="eggNOG" id="KOG2044">
    <property type="taxonomic scope" value="Eukaryota"/>
</dbReference>
<dbReference type="HOGENOM" id="CLU_006038_1_1_1"/>
<dbReference type="InParanoid" id="Q6BNU7"/>
<dbReference type="OMA" id="WVALYYY"/>
<dbReference type="OrthoDB" id="28245at2759"/>
<dbReference type="Proteomes" id="UP000000599">
    <property type="component" value="Chromosome E"/>
</dbReference>
<dbReference type="GO" id="GO:0090730">
    <property type="term" value="C:Las1 complex"/>
    <property type="evidence" value="ECO:0007669"/>
    <property type="project" value="EnsemblFungi"/>
</dbReference>
<dbReference type="GO" id="GO:0110103">
    <property type="term" value="C:RNA polymerase II termination complex"/>
    <property type="evidence" value="ECO:0007669"/>
    <property type="project" value="EnsemblFungi"/>
</dbReference>
<dbReference type="GO" id="GO:0004534">
    <property type="term" value="F:5'-3' RNA exonuclease activity"/>
    <property type="evidence" value="ECO:0007669"/>
    <property type="project" value="EnsemblFungi"/>
</dbReference>
<dbReference type="GO" id="GO:0019843">
    <property type="term" value="F:rRNA binding"/>
    <property type="evidence" value="ECO:0007669"/>
    <property type="project" value="EnsemblFungi"/>
</dbReference>
<dbReference type="GO" id="GO:0000448">
    <property type="term" value="P:cleavage in ITS2 between 5.8S rRNA and LSU-rRNA of tricistronic rRNA transcript (SSU-rRNA, 5.8S rRNA, LSU-rRNA)"/>
    <property type="evidence" value="ECO:0007669"/>
    <property type="project" value="EnsemblFungi"/>
</dbReference>
<dbReference type="GO" id="GO:0000398">
    <property type="term" value="P:mRNA splicing, via spliceosome"/>
    <property type="evidence" value="ECO:0007669"/>
    <property type="project" value="EnsemblFungi"/>
</dbReference>
<dbReference type="GO" id="GO:0110155">
    <property type="term" value="P:NAD-cap decapping"/>
    <property type="evidence" value="ECO:0007669"/>
    <property type="project" value="EnsemblFungi"/>
</dbReference>
<dbReference type="GO" id="GO:0034244">
    <property type="term" value="P:negative regulation of transcription elongation by RNA polymerase II"/>
    <property type="evidence" value="ECO:0007669"/>
    <property type="project" value="EnsemblFungi"/>
</dbReference>
<dbReference type="GO" id="GO:0071028">
    <property type="term" value="P:nuclear mRNA surveillance"/>
    <property type="evidence" value="ECO:0007669"/>
    <property type="project" value="EnsemblFungi"/>
</dbReference>
<dbReference type="GO" id="GO:0071035">
    <property type="term" value="P:nuclear polyadenylation-dependent rRNA catabolic process"/>
    <property type="evidence" value="ECO:0007669"/>
    <property type="project" value="EnsemblFungi"/>
</dbReference>
<dbReference type="GO" id="GO:1904595">
    <property type="term" value="P:positive regulation of termination of RNA polymerase II transcription"/>
    <property type="evidence" value="ECO:0007669"/>
    <property type="project" value="EnsemblFungi"/>
</dbReference>
<dbReference type="GO" id="GO:0043144">
    <property type="term" value="P:sno(s)RNA processing"/>
    <property type="evidence" value="ECO:0007669"/>
    <property type="project" value="EnsemblFungi"/>
</dbReference>
<dbReference type="GO" id="GO:0030847">
    <property type="term" value="P:termination of RNA polymerase II transcription, exosome-dependent"/>
    <property type="evidence" value="ECO:0007669"/>
    <property type="project" value="EnsemblFungi"/>
</dbReference>
<dbReference type="GO" id="GO:0030846">
    <property type="term" value="P:termination of RNA polymerase II transcription, poly(A)-coupled"/>
    <property type="evidence" value="ECO:0007669"/>
    <property type="project" value="EnsemblFungi"/>
</dbReference>
<dbReference type="CDD" id="cd18673">
    <property type="entry name" value="PIN_XRN1-2-like"/>
    <property type="match status" value="1"/>
</dbReference>
<dbReference type="FunFam" id="1.25.40.1050:FF:000002">
    <property type="entry name" value="5'-3' exoribonuclease"/>
    <property type="match status" value="1"/>
</dbReference>
<dbReference type="FunFam" id="3.40.50.12390:FF:000005">
    <property type="entry name" value="5'-3' exoribonuclease 2"/>
    <property type="match status" value="1"/>
</dbReference>
<dbReference type="Gene3D" id="1.25.40.1050">
    <property type="match status" value="1"/>
</dbReference>
<dbReference type="Gene3D" id="3.40.50.12390">
    <property type="match status" value="1"/>
</dbReference>
<dbReference type="InterPro" id="IPR027073">
    <property type="entry name" value="5_3_exoribonuclease"/>
</dbReference>
<dbReference type="InterPro" id="IPR041412">
    <property type="entry name" value="Xrn1_helical"/>
</dbReference>
<dbReference type="InterPro" id="IPR004859">
    <property type="entry name" value="Xrn1_N"/>
</dbReference>
<dbReference type="InterPro" id="IPR017151">
    <property type="entry name" value="Xrn2/3/4"/>
</dbReference>
<dbReference type="PANTHER" id="PTHR12341:SF41">
    <property type="entry name" value="5'-3' EXORIBONUCLEASE 2"/>
    <property type="match status" value="1"/>
</dbReference>
<dbReference type="PANTHER" id="PTHR12341">
    <property type="entry name" value="5'-&gt;3' EXORIBONUCLEASE"/>
    <property type="match status" value="1"/>
</dbReference>
<dbReference type="Pfam" id="PF17846">
    <property type="entry name" value="XRN_M"/>
    <property type="match status" value="1"/>
</dbReference>
<dbReference type="Pfam" id="PF03159">
    <property type="entry name" value="XRN_N"/>
    <property type="match status" value="1"/>
</dbReference>
<dbReference type="PIRSF" id="PIRSF037239">
    <property type="entry name" value="Exonuclease_Xrn2"/>
    <property type="match status" value="1"/>
</dbReference>
<evidence type="ECO:0000250" key="1"/>
<evidence type="ECO:0000250" key="2">
    <source>
        <dbReference type="UniProtKB" id="P40848"/>
    </source>
</evidence>
<evidence type="ECO:0000250" key="3">
    <source>
        <dbReference type="UniProtKB" id="Q02792"/>
    </source>
</evidence>
<evidence type="ECO:0000255" key="4"/>
<evidence type="ECO:0000256" key="5">
    <source>
        <dbReference type="SAM" id="MobiDB-lite"/>
    </source>
</evidence>
<evidence type="ECO:0000305" key="6"/>
<gene>
    <name type="primary">RAT1</name>
    <name type="ordered locus">DEHA2E18898g</name>
</gene>
<organism>
    <name type="scientific">Debaryomyces hansenii (strain ATCC 36239 / CBS 767 / BCRC 21394 / JCM 1990 / NBRC 0083 / IGC 2968)</name>
    <name type="common">Yeast</name>
    <name type="synonym">Torulaspora hansenii</name>
    <dbReference type="NCBI Taxonomy" id="284592"/>
    <lineage>
        <taxon>Eukaryota</taxon>
        <taxon>Fungi</taxon>
        <taxon>Dikarya</taxon>
        <taxon>Ascomycota</taxon>
        <taxon>Saccharomycotina</taxon>
        <taxon>Pichiomycetes</taxon>
        <taxon>Debaryomycetaceae</taxon>
        <taxon>Debaryomyces</taxon>
    </lineage>
</organism>